<evidence type="ECO:0000255" key="1">
    <source>
        <dbReference type="HAMAP-Rule" id="MF_00082"/>
    </source>
</evidence>
<protein>
    <recommendedName>
        <fullName evidence="1">Acetylglutamate kinase</fullName>
        <ecNumber evidence="1">2.7.2.8</ecNumber>
    </recommendedName>
    <alternativeName>
        <fullName evidence="1">N-acetyl-L-glutamate 5-phosphotransferase</fullName>
    </alternativeName>
    <alternativeName>
        <fullName evidence="1">NAG kinase</fullName>
        <shortName evidence="1">NAGK</shortName>
    </alternativeName>
</protein>
<comment type="function">
    <text evidence="1">Catalyzes the ATP-dependent phosphorylation of N-acetyl-L-glutamate.</text>
</comment>
<comment type="catalytic activity">
    <reaction evidence="1">
        <text>N-acetyl-L-glutamate + ATP = N-acetyl-L-glutamyl 5-phosphate + ADP</text>
        <dbReference type="Rhea" id="RHEA:14629"/>
        <dbReference type="ChEBI" id="CHEBI:30616"/>
        <dbReference type="ChEBI" id="CHEBI:44337"/>
        <dbReference type="ChEBI" id="CHEBI:57936"/>
        <dbReference type="ChEBI" id="CHEBI:456216"/>
        <dbReference type="EC" id="2.7.2.8"/>
    </reaction>
</comment>
<comment type="pathway">
    <text evidence="1">Amino-acid biosynthesis; L-arginine biosynthesis; N(2)-acetyl-L-ornithine from L-glutamate: step 2/4.</text>
</comment>
<comment type="subcellular location">
    <subcellularLocation>
        <location evidence="1">Cytoplasm</location>
    </subcellularLocation>
</comment>
<comment type="similarity">
    <text evidence="1">Belongs to the acetylglutamate kinase family. ArgB subfamily.</text>
</comment>
<feature type="chain" id="PRO_1000117127" description="Acetylglutamate kinase">
    <location>
        <begin position="1"/>
        <end position="301"/>
    </location>
</feature>
<feature type="binding site" evidence="1">
    <location>
        <begin position="68"/>
        <end position="69"/>
    </location>
    <ligand>
        <name>substrate</name>
    </ligand>
</feature>
<feature type="binding site" evidence="1">
    <location>
        <position position="90"/>
    </location>
    <ligand>
        <name>substrate</name>
    </ligand>
</feature>
<feature type="binding site" evidence="1">
    <location>
        <position position="195"/>
    </location>
    <ligand>
        <name>substrate</name>
    </ligand>
</feature>
<feature type="site" description="Transition state stabilizer" evidence="1">
    <location>
        <position position="33"/>
    </location>
</feature>
<feature type="site" description="Transition state stabilizer" evidence="1">
    <location>
        <position position="255"/>
    </location>
</feature>
<dbReference type="EC" id="2.7.2.8" evidence="1"/>
<dbReference type="EMBL" id="FM209186">
    <property type="protein sequence ID" value="CAW30472.1"/>
    <property type="molecule type" value="Genomic_DNA"/>
</dbReference>
<dbReference type="RefSeq" id="WP_003096572.1">
    <property type="nucleotide sequence ID" value="NC_011770.1"/>
</dbReference>
<dbReference type="SMR" id="B7V5L4"/>
<dbReference type="KEGG" id="pag:PLES_57181"/>
<dbReference type="HOGENOM" id="CLU_053680_0_0_6"/>
<dbReference type="UniPathway" id="UPA00068">
    <property type="reaction ID" value="UER00107"/>
</dbReference>
<dbReference type="GO" id="GO:0005737">
    <property type="term" value="C:cytoplasm"/>
    <property type="evidence" value="ECO:0007669"/>
    <property type="project" value="UniProtKB-SubCell"/>
</dbReference>
<dbReference type="GO" id="GO:0003991">
    <property type="term" value="F:acetylglutamate kinase activity"/>
    <property type="evidence" value="ECO:0007669"/>
    <property type="project" value="UniProtKB-UniRule"/>
</dbReference>
<dbReference type="GO" id="GO:0005524">
    <property type="term" value="F:ATP binding"/>
    <property type="evidence" value="ECO:0007669"/>
    <property type="project" value="UniProtKB-UniRule"/>
</dbReference>
<dbReference type="GO" id="GO:0042450">
    <property type="term" value="P:arginine biosynthetic process via ornithine"/>
    <property type="evidence" value="ECO:0007669"/>
    <property type="project" value="UniProtKB-UniRule"/>
</dbReference>
<dbReference type="GO" id="GO:0006526">
    <property type="term" value="P:L-arginine biosynthetic process"/>
    <property type="evidence" value="ECO:0007669"/>
    <property type="project" value="UniProtKB-UniPathway"/>
</dbReference>
<dbReference type="CDD" id="cd04250">
    <property type="entry name" value="AAK_NAGK-C"/>
    <property type="match status" value="1"/>
</dbReference>
<dbReference type="FunFam" id="3.40.1160.10:FF:000004">
    <property type="entry name" value="Acetylglutamate kinase"/>
    <property type="match status" value="1"/>
</dbReference>
<dbReference type="Gene3D" id="3.40.1160.10">
    <property type="entry name" value="Acetylglutamate kinase-like"/>
    <property type="match status" value="1"/>
</dbReference>
<dbReference type="HAMAP" id="MF_00082">
    <property type="entry name" value="ArgB"/>
    <property type="match status" value="1"/>
</dbReference>
<dbReference type="InterPro" id="IPR036393">
    <property type="entry name" value="AceGlu_kinase-like_sf"/>
</dbReference>
<dbReference type="InterPro" id="IPR004662">
    <property type="entry name" value="AcgluKinase_fam"/>
</dbReference>
<dbReference type="InterPro" id="IPR037528">
    <property type="entry name" value="ArgB"/>
</dbReference>
<dbReference type="InterPro" id="IPR001048">
    <property type="entry name" value="Asp/Glu/Uridylate_kinase"/>
</dbReference>
<dbReference type="InterPro" id="IPR001057">
    <property type="entry name" value="Glu/AcGlu_kinase"/>
</dbReference>
<dbReference type="InterPro" id="IPR041727">
    <property type="entry name" value="NAGK-C"/>
</dbReference>
<dbReference type="NCBIfam" id="TIGR00761">
    <property type="entry name" value="argB"/>
    <property type="match status" value="1"/>
</dbReference>
<dbReference type="PANTHER" id="PTHR23342">
    <property type="entry name" value="N-ACETYLGLUTAMATE SYNTHASE"/>
    <property type="match status" value="1"/>
</dbReference>
<dbReference type="PANTHER" id="PTHR23342:SF0">
    <property type="entry name" value="N-ACETYLGLUTAMATE SYNTHASE, MITOCHONDRIAL"/>
    <property type="match status" value="1"/>
</dbReference>
<dbReference type="Pfam" id="PF00696">
    <property type="entry name" value="AA_kinase"/>
    <property type="match status" value="1"/>
</dbReference>
<dbReference type="PIRSF" id="PIRSF000728">
    <property type="entry name" value="NAGK"/>
    <property type="match status" value="1"/>
</dbReference>
<dbReference type="PRINTS" id="PR00474">
    <property type="entry name" value="GLU5KINASE"/>
</dbReference>
<dbReference type="SUPFAM" id="SSF53633">
    <property type="entry name" value="Carbamate kinase-like"/>
    <property type="match status" value="1"/>
</dbReference>
<organism>
    <name type="scientific">Pseudomonas aeruginosa (strain LESB58)</name>
    <dbReference type="NCBI Taxonomy" id="557722"/>
    <lineage>
        <taxon>Bacteria</taxon>
        <taxon>Pseudomonadati</taxon>
        <taxon>Pseudomonadota</taxon>
        <taxon>Gammaproteobacteria</taxon>
        <taxon>Pseudomonadales</taxon>
        <taxon>Pseudomonadaceae</taxon>
        <taxon>Pseudomonas</taxon>
    </lineage>
</organism>
<sequence length="301" mass="31849">MTLSRDDAAQVAKVLSEALPYIRRFVGKTLVIKYGGNAMESEELKAGFARDVVLMKAVGINPVVVHGGGPQIGDLLKRLSIESHFIDGMRVTDAATMDVVEMVLGGQVNKDIVNLINRHGGSAIGLTGKDAELIRAKKLTVTRQTPEMTKPEIIDIGHVGEVTGVNVGLLNMLVKGDFIPVIAPIGVGSNGESYNINADLVAGKVAEALKAEKLMLLTNIAGLMDKQGQVLTGLSTEQVNELIADGTIYGGMLPKIRCALEAVQGGVTSAHIIDGRVPNAVLLEIFTDSGVGTLISNRKRH</sequence>
<name>ARGB_PSEA8</name>
<accession>B7V5L4</accession>
<gene>
    <name evidence="1" type="primary">argB</name>
    <name type="ordered locus">PLES_57181</name>
</gene>
<keyword id="KW-0028">Amino-acid biosynthesis</keyword>
<keyword id="KW-0055">Arginine biosynthesis</keyword>
<keyword id="KW-0067">ATP-binding</keyword>
<keyword id="KW-0963">Cytoplasm</keyword>
<keyword id="KW-0418">Kinase</keyword>
<keyword id="KW-0547">Nucleotide-binding</keyword>
<keyword id="KW-0808">Transferase</keyword>
<reference key="1">
    <citation type="journal article" date="2009" name="Genome Res.">
        <title>Newly introduced genomic prophage islands are critical determinants of in vivo competitiveness in the Liverpool epidemic strain of Pseudomonas aeruginosa.</title>
        <authorList>
            <person name="Winstanley C."/>
            <person name="Langille M.G.I."/>
            <person name="Fothergill J.L."/>
            <person name="Kukavica-Ibrulj I."/>
            <person name="Paradis-Bleau C."/>
            <person name="Sanschagrin F."/>
            <person name="Thomson N.R."/>
            <person name="Winsor G.L."/>
            <person name="Quail M.A."/>
            <person name="Lennard N."/>
            <person name="Bignell A."/>
            <person name="Clarke L."/>
            <person name="Seeger K."/>
            <person name="Saunders D."/>
            <person name="Harris D."/>
            <person name="Parkhill J."/>
            <person name="Hancock R.E.W."/>
            <person name="Brinkman F.S.L."/>
            <person name="Levesque R.C."/>
        </authorList>
    </citation>
    <scope>NUCLEOTIDE SEQUENCE [LARGE SCALE GENOMIC DNA]</scope>
    <source>
        <strain>LESB58</strain>
    </source>
</reference>
<proteinExistence type="inferred from homology"/>